<organism>
    <name type="scientific">Influenza A virus (strain A/Pintail/Alberta/119/1979 H4N6)</name>
    <dbReference type="NCBI Taxonomy" id="384504"/>
    <lineage>
        <taxon>Viruses</taxon>
        <taxon>Riboviria</taxon>
        <taxon>Orthornavirae</taxon>
        <taxon>Negarnaviricota</taxon>
        <taxon>Polyploviricotina</taxon>
        <taxon>Insthoviricetes</taxon>
        <taxon>Articulavirales</taxon>
        <taxon>Orthomyxoviridae</taxon>
        <taxon>Alphainfluenzavirus</taxon>
        <taxon>Alphainfluenzavirus influenzae</taxon>
        <taxon>Influenza A virus</taxon>
    </lineage>
</organism>
<organismHost>
    <name type="scientific">Aves</name>
    <dbReference type="NCBI Taxonomy" id="8782"/>
</organismHost>
<organismHost>
    <name type="scientific">Sus scrofa</name>
    <name type="common">Pig</name>
    <dbReference type="NCBI Taxonomy" id="9823"/>
</organismHost>
<comment type="function">
    <text evidence="1">Inhibits post-transcriptional processing of cellular pre-mRNA, by binding and inhibiting two cellular proteins that are required for the 3'-end processing of cellular pre-mRNAs: the 30 kDa cleavage and polyadenylation specificity factor/CPSF4 and the poly(A)-binding protein 2/PABPN1. In turn, unprocessed 3' end pre-mRNAs accumulate in the host nucleus and are no longer exported to the cytoplasm. Cellular protein synthesis is thereby shut off very early after virus infection. Viral protein synthesis is not affected by the inhibition of the cellular 3' end processing machinery because the poly(A) tails of viral mRNAs are produced by the viral polymerase through a stuttering mechanism. Prevents the establishment of the cellular antiviral state by inhibiting TRIM25-mediated RIGI ubiquitination, which normally triggers the antiviral transduction signal that leads to the activation of type I IFN genes by transcription factors IRF3 and IRF7. Also binds poly(A) and U6 snRNA. Inhibits the integrated stress response (ISR) in the infected cell by blocking dsRNA binding by EIF2AK2/PKR and further phosphorylation of EIF2S1/EIF-2ALPHA. Stress granule formation is thus inhibited, which allows protein synthesis and viral replication.</text>
</comment>
<comment type="subunit">
    <text evidence="1">Homodimer. Interacts with host TRIM25 (via coiled coil); this interaction specifically inhibits TRIM25 multimerization and TRIM25-mediated RIGI CARD ubiquitination. Interacts with human EIF2AK2/PKR, CPSF4, IVNS1ABP and PABPN1.</text>
</comment>
<comment type="subcellular location">
    <subcellularLocation>
        <location evidence="1">Host nucleus</location>
    </subcellularLocation>
    <subcellularLocation>
        <location evidence="1">Host cytoplasm</location>
    </subcellularLocation>
    <text evidence="1">In uninfected, transfected cells, NS1 is localized in the nucleus. Only in virus infected cells, the nuclear export signal is unveiled, presumably by a viral protein, and a fraction of NS1 is exported in the cytoplasm.</text>
</comment>
<comment type="alternative products">
    <event type="alternative splicing"/>
    <isoform>
        <id>P13140-1</id>
        <name>NS1</name>
        <sequence type="displayed"/>
    </isoform>
    <isoform>
        <id>P13148-1</id>
        <name>NEP</name>
        <name>NS2</name>
        <sequence type="external"/>
    </isoform>
</comment>
<comment type="domain">
    <text evidence="1">The dsRNA-binding region is required for suppression of RNA silencing.</text>
</comment>
<comment type="PTM">
    <text evidence="1">Upon interferon induction, ISGylated via host HERC5; this results in the impairment of NS1 interaction with RNA targets due to its inability to form homodimers and to interact with host EIF2AK2/PKR.</text>
</comment>
<comment type="similarity">
    <text evidence="1">Belongs to the influenza A viruses NS1 family.</text>
</comment>
<reference key="1">
    <citation type="journal article" date="1989" name="Virology">
        <title>The B allele of the NS gene of avian influenza viruses, but not the A allele, attenuates a human influenza A virus for squirrel monkeys.</title>
        <authorList>
            <person name="Treanor J.J."/>
            <person name="Snyder M.H."/>
            <person name="London W.T."/>
            <person name="Murphy B.R."/>
        </authorList>
    </citation>
    <scope>NUCLEOTIDE SEQUENCE [GENOMIC RNA]</scope>
</reference>
<reference key="2">
    <citation type="journal article" date="2003" name="Virology">
        <title>Intracellular warfare between human influenza viruses and human cells: the roles of the viral NS1 protein.</title>
        <authorList>
            <person name="Krug R.M."/>
            <person name="Yuan W."/>
            <person name="Noah D.L."/>
            <person name="Latham A.G."/>
        </authorList>
    </citation>
    <scope>REVIEW</scope>
</reference>
<accession>P13140</accession>
<feature type="chain" id="PRO_0000078941" description="Non-structural protein 1">
    <location>
        <begin position="1"/>
        <end position="230"/>
    </location>
</feature>
<feature type="region of interest" description="RNA-binding and homodimerization" evidence="1">
    <location>
        <begin position="1"/>
        <end position="73"/>
    </location>
</feature>
<feature type="region of interest" description="CPSF4-binding" evidence="1">
    <location>
        <begin position="180"/>
        <end position="215"/>
    </location>
</feature>
<feature type="region of interest" description="PABPN1-binding" evidence="1">
    <location>
        <begin position="223"/>
        <end position="230"/>
    </location>
</feature>
<feature type="short sequence motif" description="Nuclear localization signal" evidence="1">
    <location>
        <begin position="34"/>
        <end position="38"/>
    </location>
</feature>
<feature type="short sequence motif" description="Nuclear export signal" evidence="1">
    <location>
        <begin position="137"/>
        <end position="146"/>
    </location>
</feature>
<sequence length="230" mass="26121">MDSNTVSSFQADCFLWHVRKRFADQELGDAPFLDRPRAHQKSLRGRGSTLGLDIETATRAGKQIVERILEEESDEALKMTIASVPASRYLTDMTLEEMSRDWFMLMPKQKVAGSLCIRMDQAIMDKNIILKANFSVIFDRLETLILLRAFTEEGAIVGEISPLPSLPGHTDEDVKNAIGVLIGGLEWNDNTVRVSETLQRFAWRSCNEDWRPPLPPKQKRKMARTIESEV</sequence>
<protein>
    <recommendedName>
        <fullName evidence="1">Non-structural protein 1</fullName>
        <shortName evidence="1">NS1</shortName>
    </recommendedName>
    <alternativeName>
        <fullName evidence="1">NS1A</fullName>
    </alternativeName>
</protein>
<evidence type="ECO:0000255" key="1">
    <source>
        <dbReference type="HAMAP-Rule" id="MF_04066"/>
    </source>
</evidence>
<proteinExistence type="inferred from homology"/>
<dbReference type="EMBL" id="M25374">
    <property type="protein sequence ID" value="AAA43557.1"/>
    <property type="molecule type" value="Genomic_RNA"/>
</dbReference>
<dbReference type="PIR" id="G32662">
    <property type="entry name" value="MNIVA4"/>
</dbReference>
<dbReference type="SMR" id="P13140"/>
<dbReference type="GO" id="GO:0030430">
    <property type="term" value="C:host cell cytoplasm"/>
    <property type="evidence" value="ECO:0007669"/>
    <property type="project" value="UniProtKB-SubCell"/>
</dbReference>
<dbReference type="GO" id="GO:0042025">
    <property type="term" value="C:host cell nucleus"/>
    <property type="evidence" value="ECO:0007669"/>
    <property type="project" value="UniProtKB-SubCell"/>
</dbReference>
<dbReference type="GO" id="GO:0030291">
    <property type="term" value="F:protein serine/threonine kinase inhibitor activity"/>
    <property type="evidence" value="ECO:0007669"/>
    <property type="project" value="UniProtKB-KW"/>
</dbReference>
<dbReference type="GO" id="GO:0003723">
    <property type="term" value="F:RNA binding"/>
    <property type="evidence" value="ECO:0007669"/>
    <property type="project" value="UniProtKB-KW"/>
</dbReference>
<dbReference type="GO" id="GO:0039540">
    <property type="term" value="P:symbiont-mediated suppression of host cytoplasmic pattern recognition receptor signaling pathway via inhibition of RIG-I activity"/>
    <property type="evidence" value="ECO:0007669"/>
    <property type="project" value="UniProtKB-KW"/>
</dbReference>
<dbReference type="GO" id="GO:0039657">
    <property type="term" value="P:symbiont-mediated suppression of host gene expression"/>
    <property type="evidence" value="ECO:0007669"/>
    <property type="project" value="UniProtKB-KW"/>
</dbReference>
<dbReference type="GO" id="GO:0039524">
    <property type="term" value="P:symbiont-mediated suppression of host mRNA processing"/>
    <property type="evidence" value="ECO:0007669"/>
    <property type="project" value="UniProtKB-KW"/>
</dbReference>
<dbReference type="GO" id="GO:0039580">
    <property type="term" value="P:symbiont-mediated suppression of host PKR/eIFalpha signaling"/>
    <property type="evidence" value="ECO:0007669"/>
    <property type="project" value="UniProtKB-KW"/>
</dbReference>
<dbReference type="GO" id="GO:0039502">
    <property type="term" value="P:symbiont-mediated suppression of host type I interferon-mediated signaling pathway"/>
    <property type="evidence" value="ECO:0007669"/>
    <property type="project" value="UniProtKB-KW"/>
</dbReference>
<dbReference type="FunFam" id="1.10.287.10:FF:000001">
    <property type="entry name" value="Non-structural protein 1"/>
    <property type="match status" value="1"/>
</dbReference>
<dbReference type="FunFam" id="3.30.420.330:FF:000001">
    <property type="entry name" value="Non-structural protein 1"/>
    <property type="match status" value="1"/>
</dbReference>
<dbReference type="Gene3D" id="3.30.420.330">
    <property type="entry name" value="Influenza virus non-structural protein, effector domain"/>
    <property type="match status" value="1"/>
</dbReference>
<dbReference type="Gene3D" id="1.10.287.10">
    <property type="entry name" value="S15/NS1, RNA-binding"/>
    <property type="match status" value="1"/>
</dbReference>
<dbReference type="HAMAP" id="MF_04066">
    <property type="entry name" value="INFV_NS1"/>
    <property type="match status" value="1"/>
</dbReference>
<dbReference type="InterPro" id="IPR004208">
    <property type="entry name" value="NS1"/>
</dbReference>
<dbReference type="InterPro" id="IPR000256">
    <property type="entry name" value="NS1A"/>
</dbReference>
<dbReference type="InterPro" id="IPR038064">
    <property type="entry name" value="NS1A_effect_dom-like_sf"/>
</dbReference>
<dbReference type="InterPro" id="IPR009068">
    <property type="entry name" value="uS15_NS1_RNA-bd_sf"/>
</dbReference>
<dbReference type="Pfam" id="PF00600">
    <property type="entry name" value="Flu_NS1"/>
    <property type="match status" value="1"/>
</dbReference>
<dbReference type="SUPFAM" id="SSF143021">
    <property type="entry name" value="Ns1 effector domain-like"/>
    <property type="match status" value="1"/>
</dbReference>
<dbReference type="SUPFAM" id="SSF47060">
    <property type="entry name" value="S15/NS1 RNA-binding domain"/>
    <property type="match status" value="1"/>
</dbReference>
<gene>
    <name evidence="1" type="primary">NS</name>
</gene>
<name>NS1_I79A1</name>
<keyword id="KW-0025">Alternative splicing</keyword>
<keyword id="KW-1262">Eukaryotic host gene expression shutoff by virus</keyword>
<keyword id="KW-1035">Host cytoplasm</keyword>
<keyword id="KW-1190">Host gene expression shutoff by virus</keyword>
<keyword id="KW-1192">Host mRNA suppression by virus</keyword>
<keyword id="KW-1048">Host nucleus</keyword>
<keyword id="KW-0945">Host-virus interaction</keyword>
<keyword id="KW-1090">Inhibition of host innate immune response by virus</keyword>
<keyword id="KW-1114">Inhibition of host interferon signaling pathway by virus</keyword>
<keyword id="KW-1102">Inhibition of host PKR by virus</keyword>
<keyword id="KW-1103">Inhibition of host pre-mRNA processing by virus</keyword>
<keyword id="KW-1088">Inhibition of host RIG-I by virus</keyword>
<keyword id="KW-1113">Inhibition of host RLR pathway by virus</keyword>
<keyword id="KW-0922">Interferon antiviral system evasion</keyword>
<keyword id="KW-0694">RNA-binding</keyword>
<keyword id="KW-0832">Ubl conjugation</keyword>
<keyword id="KW-0899">Viral immunoevasion</keyword>